<sequence>MNISGLIIGLGNPGREYDRTRHNFGFMFIDALLEEAQRNPFARCEQLSGGKKKYDLWRCDIVEGQAPWLLAKPQTFMNLSGEAVLAIASFYRVKPAAMVVAHDELDLPLGRMRFKMGGGNAGHNGLKSITQCLGTPDFHRLRLGIGKPPAGGETTGWVLGRFSQSDTAMVDAVLEAAIQGIRTFATEGDVAATQYINAFRP</sequence>
<evidence type="ECO:0000255" key="1">
    <source>
        <dbReference type="HAMAP-Rule" id="MF_00083"/>
    </source>
</evidence>
<comment type="function">
    <text evidence="1">Hydrolyzes ribosome-free peptidyl-tRNAs (with 1 or more amino acids incorporated), which drop off the ribosome during protein synthesis, or as a result of ribosome stalling.</text>
</comment>
<comment type="function">
    <text evidence="1">Catalyzes the release of premature peptidyl moieties from peptidyl-tRNA molecules trapped in stalled 50S ribosomal subunits, and thus maintains levels of free tRNAs and 50S ribosomes.</text>
</comment>
<comment type="catalytic activity">
    <reaction evidence="1">
        <text>an N-acyl-L-alpha-aminoacyl-tRNA + H2O = an N-acyl-L-amino acid + a tRNA + H(+)</text>
        <dbReference type="Rhea" id="RHEA:54448"/>
        <dbReference type="Rhea" id="RHEA-COMP:10123"/>
        <dbReference type="Rhea" id="RHEA-COMP:13883"/>
        <dbReference type="ChEBI" id="CHEBI:15377"/>
        <dbReference type="ChEBI" id="CHEBI:15378"/>
        <dbReference type="ChEBI" id="CHEBI:59874"/>
        <dbReference type="ChEBI" id="CHEBI:78442"/>
        <dbReference type="ChEBI" id="CHEBI:138191"/>
        <dbReference type="EC" id="3.1.1.29"/>
    </reaction>
</comment>
<comment type="subunit">
    <text evidence="1">Monomer.</text>
</comment>
<comment type="subcellular location">
    <subcellularLocation>
        <location evidence="1">Cytoplasm</location>
    </subcellularLocation>
</comment>
<comment type="similarity">
    <text evidence="1">Belongs to the PTH family.</text>
</comment>
<protein>
    <recommendedName>
        <fullName evidence="1">Peptidyl-tRNA hydrolase</fullName>
        <shortName evidence="1">Pth</shortName>
        <ecNumber evidence="1">3.1.1.29</ecNumber>
    </recommendedName>
</protein>
<keyword id="KW-0963">Cytoplasm</keyword>
<keyword id="KW-0378">Hydrolase</keyword>
<keyword id="KW-1185">Reference proteome</keyword>
<keyword id="KW-0694">RNA-binding</keyword>
<keyword id="KW-0820">tRNA-binding</keyword>
<name>PTH_NITV2</name>
<organism>
    <name type="scientific">Nitratidesulfovibrio vulgaris (strain ATCC 29579 / DSM 644 / CCUG 34227 / NCIMB 8303 / VKM B-1760 / Hildenborough)</name>
    <name type="common">Desulfovibrio vulgaris</name>
    <dbReference type="NCBI Taxonomy" id="882"/>
    <lineage>
        <taxon>Bacteria</taxon>
        <taxon>Pseudomonadati</taxon>
        <taxon>Thermodesulfobacteriota</taxon>
        <taxon>Desulfovibrionia</taxon>
        <taxon>Desulfovibrionales</taxon>
        <taxon>Desulfovibrionaceae</taxon>
        <taxon>Nitratidesulfovibrio</taxon>
    </lineage>
</organism>
<dbReference type="EC" id="3.1.1.29" evidence="1"/>
<dbReference type="EMBL" id="AE017285">
    <property type="protein sequence ID" value="AAS96051.1"/>
    <property type="molecule type" value="Genomic_DNA"/>
</dbReference>
<dbReference type="RefSeq" id="WP_010938864.1">
    <property type="nucleotide sequence ID" value="NC_002937.3"/>
</dbReference>
<dbReference type="RefSeq" id="YP_010792.1">
    <property type="nucleotide sequence ID" value="NC_002937.3"/>
</dbReference>
<dbReference type="SMR" id="Q72BR1"/>
<dbReference type="STRING" id="882.DVU_1573"/>
<dbReference type="PaxDb" id="882-DVU_1573"/>
<dbReference type="EnsemblBacteria" id="AAS96051">
    <property type="protein sequence ID" value="AAS96051"/>
    <property type="gene ID" value="DVU_1573"/>
</dbReference>
<dbReference type="KEGG" id="dvu:DVU_1573"/>
<dbReference type="PATRIC" id="fig|882.5.peg.1448"/>
<dbReference type="eggNOG" id="COG0193">
    <property type="taxonomic scope" value="Bacteria"/>
</dbReference>
<dbReference type="HOGENOM" id="CLU_062456_3_1_7"/>
<dbReference type="OrthoDB" id="9800507at2"/>
<dbReference type="PhylomeDB" id="Q72BR1"/>
<dbReference type="Proteomes" id="UP000002194">
    <property type="component" value="Chromosome"/>
</dbReference>
<dbReference type="GO" id="GO:0005737">
    <property type="term" value="C:cytoplasm"/>
    <property type="evidence" value="ECO:0007669"/>
    <property type="project" value="UniProtKB-SubCell"/>
</dbReference>
<dbReference type="GO" id="GO:0004045">
    <property type="term" value="F:peptidyl-tRNA hydrolase activity"/>
    <property type="evidence" value="ECO:0007669"/>
    <property type="project" value="UniProtKB-UniRule"/>
</dbReference>
<dbReference type="GO" id="GO:0000049">
    <property type="term" value="F:tRNA binding"/>
    <property type="evidence" value="ECO:0007669"/>
    <property type="project" value="UniProtKB-UniRule"/>
</dbReference>
<dbReference type="GO" id="GO:0006515">
    <property type="term" value="P:protein quality control for misfolded or incompletely synthesized proteins"/>
    <property type="evidence" value="ECO:0007669"/>
    <property type="project" value="UniProtKB-UniRule"/>
</dbReference>
<dbReference type="GO" id="GO:0072344">
    <property type="term" value="P:rescue of stalled ribosome"/>
    <property type="evidence" value="ECO:0007669"/>
    <property type="project" value="UniProtKB-UniRule"/>
</dbReference>
<dbReference type="CDD" id="cd00462">
    <property type="entry name" value="PTH"/>
    <property type="match status" value="1"/>
</dbReference>
<dbReference type="FunFam" id="3.40.50.1470:FF:000001">
    <property type="entry name" value="Peptidyl-tRNA hydrolase"/>
    <property type="match status" value="1"/>
</dbReference>
<dbReference type="Gene3D" id="3.40.50.1470">
    <property type="entry name" value="Peptidyl-tRNA hydrolase"/>
    <property type="match status" value="1"/>
</dbReference>
<dbReference type="HAMAP" id="MF_00083">
    <property type="entry name" value="Pept_tRNA_hydro_bact"/>
    <property type="match status" value="1"/>
</dbReference>
<dbReference type="InterPro" id="IPR001328">
    <property type="entry name" value="Pept_tRNA_hydro"/>
</dbReference>
<dbReference type="InterPro" id="IPR018171">
    <property type="entry name" value="Pept_tRNA_hydro_CS"/>
</dbReference>
<dbReference type="InterPro" id="IPR036416">
    <property type="entry name" value="Pept_tRNA_hydro_sf"/>
</dbReference>
<dbReference type="NCBIfam" id="TIGR00447">
    <property type="entry name" value="pth"/>
    <property type="match status" value="1"/>
</dbReference>
<dbReference type="PANTHER" id="PTHR17224">
    <property type="entry name" value="PEPTIDYL-TRNA HYDROLASE"/>
    <property type="match status" value="1"/>
</dbReference>
<dbReference type="PANTHER" id="PTHR17224:SF1">
    <property type="entry name" value="PEPTIDYL-TRNA HYDROLASE"/>
    <property type="match status" value="1"/>
</dbReference>
<dbReference type="Pfam" id="PF01195">
    <property type="entry name" value="Pept_tRNA_hydro"/>
    <property type="match status" value="1"/>
</dbReference>
<dbReference type="SUPFAM" id="SSF53178">
    <property type="entry name" value="Peptidyl-tRNA hydrolase-like"/>
    <property type="match status" value="1"/>
</dbReference>
<dbReference type="PROSITE" id="PS01195">
    <property type="entry name" value="PEPT_TRNA_HYDROL_1"/>
    <property type="match status" value="1"/>
</dbReference>
<dbReference type="PROSITE" id="PS01196">
    <property type="entry name" value="PEPT_TRNA_HYDROL_2"/>
    <property type="match status" value="1"/>
</dbReference>
<accession>Q72BR1</accession>
<reference key="1">
    <citation type="journal article" date="2004" name="Nat. Biotechnol.">
        <title>The genome sequence of the anaerobic, sulfate-reducing bacterium Desulfovibrio vulgaris Hildenborough.</title>
        <authorList>
            <person name="Heidelberg J.F."/>
            <person name="Seshadri R."/>
            <person name="Haveman S.A."/>
            <person name="Hemme C.L."/>
            <person name="Paulsen I.T."/>
            <person name="Kolonay J.F."/>
            <person name="Eisen J.A."/>
            <person name="Ward N.L."/>
            <person name="Methe B.A."/>
            <person name="Brinkac L.M."/>
            <person name="Daugherty S.C."/>
            <person name="DeBoy R.T."/>
            <person name="Dodson R.J."/>
            <person name="Durkin A.S."/>
            <person name="Madupu R."/>
            <person name="Nelson W.C."/>
            <person name="Sullivan S.A."/>
            <person name="Fouts D.E."/>
            <person name="Haft D.H."/>
            <person name="Selengut J."/>
            <person name="Peterson J.D."/>
            <person name="Davidsen T.M."/>
            <person name="Zafar N."/>
            <person name="Zhou L."/>
            <person name="Radune D."/>
            <person name="Dimitrov G."/>
            <person name="Hance M."/>
            <person name="Tran K."/>
            <person name="Khouri H.M."/>
            <person name="Gill J."/>
            <person name="Utterback T.R."/>
            <person name="Feldblyum T.V."/>
            <person name="Wall J.D."/>
            <person name="Voordouw G."/>
            <person name="Fraser C.M."/>
        </authorList>
    </citation>
    <scope>NUCLEOTIDE SEQUENCE [LARGE SCALE GENOMIC DNA]</scope>
    <source>
        <strain>ATCC 29579 / DSM 644 / CCUG 34227 / NCIMB 8303 / VKM B-1760 / Hildenborough</strain>
    </source>
</reference>
<feature type="chain" id="PRO_0000187732" description="Peptidyl-tRNA hydrolase">
    <location>
        <begin position="1"/>
        <end position="201"/>
    </location>
</feature>
<feature type="active site" description="Proton acceptor" evidence="1">
    <location>
        <position position="22"/>
    </location>
</feature>
<feature type="binding site" evidence="1">
    <location>
        <position position="17"/>
    </location>
    <ligand>
        <name>tRNA</name>
        <dbReference type="ChEBI" id="CHEBI:17843"/>
    </ligand>
</feature>
<feature type="binding site" evidence="1">
    <location>
        <position position="76"/>
    </location>
    <ligand>
        <name>tRNA</name>
        <dbReference type="ChEBI" id="CHEBI:17843"/>
    </ligand>
</feature>
<feature type="binding site" evidence="1">
    <location>
        <position position="78"/>
    </location>
    <ligand>
        <name>tRNA</name>
        <dbReference type="ChEBI" id="CHEBI:17843"/>
    </ligand>
</feature>
<feature type="binding site" evidence="1">
    <location>
        <position position="124"/>
    </location>
    <ligand>
        <name>tRNA</name>
        <dbReference type="ChEBI" id="CHEBI:17843"/>
    </ligand>
</feature>
<feature type="site" description="Discriminates between blocked and unblocked aminoacyl-tRNA" evidence="1">
    <location>
        <position position="12"/>
    </location>
</feature>
<feature type="site" description="Stabilizes the basic form of H active site to accept a proton" evidence="1">
    <location>
        <position position="103"/>
    </location>
</feature>
<gene>
    <name evidence="1" type="primary">pth</name>
    <name type="ordered locus">DVU_1573</name>
</gene>
<proteinExistence type="inferred from homology"/>